<protein>
    <recommendedName>
        <fullName>Nanos homolog 1</fullName>
    </recommendedName>
    <alternativeName>
        <fullName>Xcat-2 protein</fullName>
    </alternativeName>
</protein>
<sequence length="128" mass="14327">MDGGLCFDSWSDYLGLSSLISRGLQPQREGERPRWDVLSPASAEPLPSNESVGHKGCGFCRSNREALSLYTSHRLRALDGRVLCPVLRGYTCPLCGANGDWAHTMRYCPLRRLLRDPQSNSNNPKLRH</sequence>
<proteinExistence type="evidence at protein level"/>
<comment type="function">
    <text evidence="4">Acts as a translational repressor. Can mediate repression affecting different steps in the translation process: cap-driven, IRES-driven, polyadenylated RNAs or nonpolyadenylated RNAs. Essential for the development of primordial germ cells (PGCs) by ensuring their proper migration and survival.</text>
</comment>
<comment type="subunit">
    <text evidence="4">Interacts with ccnb1.</text>
</comment>
<comment type="subcellular location">
    <subcellularLocation>
        <location evidence="1">Cytoplasm</location>
    </subcellularLocation>
    <subcellularLocation>
        <location evidence="4">Cytoplasm</location>
        <location evidence="4">Perinuclear region</location>
    </subcellularLocation>
    <text>During early cleavage and blastula stages found close to the cell periphery in a germ plasm-like pattern. From gastrula stage on, detected predominantly in a perinuclear region.</text>
</comment>
<comment type="tissue specificity">
    <text evidence="4 5">Ovary and testis.</text>
</comment>
<comment type="developmental stage">
    <text evidence="4 5">Very abundant in the oocyte and early embryo and reduced to very low levels by gastrulation.</text>
</comment>
<comment type="domain">
    <text evidence="2">The Nanos-type zinc finger is composed of two C2HC motifs, each motif binding one molecule of zinc. It is essential for the translation repression activity of the protein.</text>
</comment>
<comment type="similarity">
    <text evidence="2">Belongs to the nanos family.</text>
</comment>
<reference key="1">
    <citation type="journal article" date="1993" name="Development">
        <title>A mRNA localized to the vegetal cortex of Xenopus oocytes encodes a protein with a nanos-like zinc finger domain.</title>
        <authorList>
            <person name="Mosquera L."/>
            <person name="Forristall C."/>
            <person name="Zhou Y."/>
            <person name="King M.L."/>
        </authorList>
    </citation>
    <scope>NUCLEOTIDE SEQUENCE [MRNA]</scope>
    <scope>TISSUE SPECIFICITY</scope>
    <scope>DEVELOPMENTAL STAGE</scope>
</reference>
<reference key="2">
    <citation type="journal article" date="2011" name="Mech. Dev.">
        <title>Nanos1 functions as a translational repressor in the Xenopus germline.</title>
        <authorList>
            <person name="Lai F."/>
            <person name="Zhou Y."/>
            <person name="Luo X."/>
            <person name="Fox J."/>
            <person name="King M.L."/>
        </authorList>
    </citation>
    <scope>NUCLEOTIDE SEQUENCE [MRNA]</scope>
    <scope>FUNCTION</scope>
    <scope>SUBCELLULAR LOCATION</scope>
    <scope>INTERACTION WITH CCNB1</scope>
    <scope>TISSUE SPECIFICITY</scope>
    <scope>DEVELOPMENTAL STAGE</scope>
</reference>
<evidence type="ECO:0000250" key="1"/>
<evidence type="ECO:0000255" key="2">
    <source>
        <dbReference type="PROSITE-ProRule" id="PRU00855"/>
    </source>
</evidence>
<evidence type="ECO:0000256" key="3">
    <source>
        <dbReference type="SAM" id="MobiDB-lite"/>
    </source>
</evidence>
<evidence type="ECO:0000269" key="4">
    <source>
    </source>
</evidence>
<evidence type="ECO:0000269" key="5">
    <source>
    </source>
</evidence>
<name>NANO1_XENLA</name>
<dbReference type="EMBL" id="X72340">
    <property type="protein sequence ID" value="CAA51067.1"/>
    <property type="molecule type" value="mRNA"/>
</dbReference>
<dbReference type="PIR" id="I51603">
    <property type="entry name" value="I51603"/>
</dbReference>
<dbReference type="RefSeq" id="NP_001081503.1">
    <property type="nucleotide sequence ID" value="NM_001088034.1"/>
</dbReference>
<dbReference type="SMR" id="Q07937"/>
<dbReference type="MINT" id="Q07937"/>
<dbReference type="GeneID" id="397875"/>
<dbReference type="KEGG" id="xla:397875"/>
<dbReference type="AGR" id="Xenbase:XB-GENE-6252322"/>
<dbReference type="CTD" id="397875"/>
<dbReference type="Xenbase" id="XB-GENE-6252322">
    <property type="gene designation" value="nanos1.L"/>
</dbReference>
<dbReference type="OMA" id="DCFDMWH"/>
<dbReference type="OrthoDB" id="10010129at2759"/>
<dbReference type="Proteomes" id="UP000186698">
    <property type="component" value="Chromosome 7L"/>
</dbReference>
<dbReference type="Bgee" id="397875">
    <property type="expression patterns" value="Expressed in oocyte and 7 other cell types or tissues"/>
</dbReference>
<dbReference type="GO" id="GO:0005737">
    <property type="term" value="C:cytoplasm"/>
    <property type="evidence" value="ECO:0000250"/>
    <property type="project" value="UniProtKB"/>
</dbReference>
<dbReference type="GO" id="GO:0060293">
    <property type="term" value="C:germ plasm"/>
    <property type="evidence" value="ECO:0000314"/>
    <property type="project" value="UniProtKB"/>
</dbReference>
<dbReference type="GO" id="GO:0048471">
    <property type="term" value="C:perinuclear region of cytoplasm"/>
    <property type="evidence" value="ECO:0000314"/>
    <property type="project" value="UniProtKB"/>
</dbReference>
<dbReference type="GO" id="GO:0003729">
    <property type="term" value="F:mRNA binding"/>
    <property type="evidence" value="ECO:0000318"/>
    <property type="project" value="GO_Central"/>
</dbReference>
<dbReference type="GO" id="GO:0030371">
    <property type="term" value="F:translation repressor activity"/>
    <property type="evidence" value="ECO:0000314"/>
    <property type="project" value="UniProtKB"/>
</dbReference>
<dbReference type="GO" id="GO:0008270">
    <property type="term" value="F:zinc ion binding"/>
    <property type="evidence" value="ECO:0007669"/>
    <property type="project" value="UniProtKB-KW"/>
</dbReference>
<dbReference type="GO" id="GO:0017148">
    <property type="term" value="P:negative regulation of translation"/>
    <property type="evidence" value="ECO:0000318"/>
    <property type="project" value="GO_Central"/>
</dbReference>
<dbReference type="GO" id="GO:0048477">
    <property type="term" value="P:oogenesis"/>
    <property type="evidence" value="ECO:0000318"/>
    <property type="project" value="GO_Central"/>
</dbReference>
<dbReference type="Gene3D" id="4.10.60.30">
    <property type="entry name" value="Nanos, RNA-binding domain"/>
    <property type="match status" value="1"/>
</dbReference>
<dbReference type="InterPro" id="IPR008705">
    <property type="entry name" value="Nanos/Xcar2"/>
</dbReference>
<dbReference type="InterPro" id="IPR038129">
    <property type="entry name" value="Nanos_sf"/>
</dbReference>
<dbReference type="InterPro" id="IPR024161">
    <property type="entry name" value="Znf_nanos-typ"/>
</dbReference>
<dbReference type="PANTHER" id="PTHR12887">
    <property type="entry name" value="NANOS PROTEIN"/>
    <property type="match status" value="1"/>
</dbReference>
<dbReference type="Pfam" id="PF05741">
    <property type="entry name" value="zf-nanos"/>
    <property type="match status" value="1"/>
</dbReference>
<dbReference type="PROSITE" id="PS51522">
    <property type="entry name" value="ZF_NANOS"/>
    <property type="match status" value="1"/>
</dbReference>
<organism>
    <name type="scientific">Xenopus laevis</name>
    <name type="common">African clawed frog</name>
    <dbReference type="NCBI Taxonomy" id="8355"/>
    <lineage>
        <taxon>Eukaryota</taxon>
        <taxon>Metazoa</taxon>
        <taxon>Chordata</taxon>
        <taxon>Craniata</taxon>
        <taxon>Vertebrata</taxon>
        <taxon>Euteleostomi</taxon>
        <taxon>Amphibia</taxon>
        <taxon>Batrachia</taxon>
        <taxon>Anura</taxon>
        <taxon>Pipoidea</taxon>
        <taxon>Pipidae</taxon>
        <taxon>Xenopodinae</taxon>
        <taxon>Xenopus</taxon>
        <taxon>Xenopus</taxon>
    </lineage>
</organism>
<gene>
    <name type="primary">nanos1</name>
    <name type="synonym">xcat-2</name>
</gene>
<accession>Q07937</accession>
<keyword id="KW-0963">Cytoplasm</keyword>
<keyword id="KW-0479">Metal-binding</keyword>
<keyword id="KW-1185">Reference proteome</keyword>
<keyword id="KW-0678">Repressor</keyword>
<keyword id="KW-0694">RNA-binding</keyword>
<keyword id="KW-0810">Translation regulation</keyword>
<keyword id="KW-0862">Zinc</keyword>
<keyword id="KW-0863">Zinc-finger</keyword>
<feature type="chain" id="PRO_0000410978" description="Nanos homolog 1">
    <location>
        <begin position="1"/>
        <end position="128"/>
    </location>
</feature>
<feature type="zinc finger region" description="Nanos-type" evidence="2">
    <location>
        <begin position="56"/>
        <end position="110"/>
    </location>
</feature>
<feature type="region of interest" description="Essential for its translational repressor activity">
    <location>
        <begin position="7"/>
        <end position="23"/>
    </location>
</feature>
<feature type="region of interest" description="Disordered" evidence="3">
    <location>
        <begin position="25"/>
        <end position="52"/>
    </location>
</feature>
<feature type="short sequence motif" description="C2HC 1" evidence="2">
    <location>
        <begin position="57"/>
        <end position="84"/>
    </location>
</feature>
<feature type="short sequence motif" description="C2HC 2" evidence="2">
    <location>
        <begin position="92"/>
        <end position="108"/>
    </location>
</feature>
<feature type="binding site" evidence="2">
    <location>
        <position position="57"/>
    </location>
    <ligand>
        <name>Zn(2+)</name>
        <dbReference type="ChEBI" id="CHEBI:29105"/>
        <label>1</label>
    </ligand>
</feature>
<feature type="binding site" evidence="2">
    <location>
        <position position="60"/>
    </location>
    <ligand>
        <name>Zn(2+)</name>
        <dbReference type="ChEBI" id="CHEBI:29105"/>
        <label>1</label>
    </ligand>
</feature>
<feature type="binding site" evidence="2">
    <location>
        <position position="73"/>
    </location>
    <ligand>
        <name>Zn(2+)</name>
        <dbReference type="ChEBI" id="CHEBI:29105"/>
        <label>1</label>
    </ligand>
</feature>
<feature type="binding site" evidence="2">
    <location>
        <position position="84"/>
    </location>
    <ligand>
        <name>Zn(2+)</name>
        <dbReference type="ChEBI" id="CHEBI:29105"/>
        <label>1</label>
    </ligand>
</feature>
<feature type="binding site" evidence="2">
    <location>
        <position position="92"/>
    </location>
    <ligand>
        <name>Zn(2+)</name>
        <dbReference type="ChEBI" id="CHEBI:29105"/>
        <label>2</label>
    </ligand>
</feature>
<feature type="binding site" evidence="2">
    <location>
        <position position="95"/>
    </location>
    <ligand>
        <name>Zn(2+)</name>
        <dbReference type="ChEBI" id="CHEBI:29105"/>
        <label>2</label>
    </ligand>
</feature>
<feature type="binding site" evidence="2">
    <location>
        <position position="103"/>
    </location>
    <ligand>
        <name>Zn(2+)</name>
        <dbReference type="ChEBI" id="CHEBI:29105"/>
        <label>2</label>
    </ligand>
</feature>
<feature type="binding site" evidence="2">
    <location>
        <position position="108"/>
    </location>
    <ligand>
        <name>Zn(2+)</name>
        <dbReference type="ChEBI" id="CHEBI:29105"/>
        <label>2</label>
    </ligand>
</feature>